<dbReference type="EMBL" id="CP000382">
    <property type="protein sequence ID" value="ABK60545.1"/>
    <property type="molecule type" value="Genomic_DNA"/>
</dbReference>
<dbReference type="RefSeq" id="WP_011721219.1">
    <property type="nucleotide sequence ID" value="NC_008593.1"/>
</dbReference>
<dbReference type="SMR" id="A0PXV0"/>
<dbReference type="STRING" id="386415.NT01CX_1119"/>
<dbReference type="KEGG" id="cno:NT01CX_1119"/>
<dbReference type="eggNOG" id="COG0185">
    <property type="taxonomic scope" value="Bacteria"/>
</dbReference>
<dbReference type="HOGENOM" id="CLU_144911_0_1_9"/>
<dbReference type="Proteomes" id="UP000008220">
    <property type="component" value="Chromosome"/>
</dbReference>
<dbReference type="GO" id="GO:0005737">
    <property type="term" value="C:cytoplasm"/>
    <property type="evidence" value="ECO:0007669"/>
    <property type="project" value="UniProtKB-ARBA"/>
</dbReference>
<dbReference type="GO" id="GO:0015935">
    <property type="term" value="C:small ribosomal subunit"/>
    <property type="evidence" value="ECO:0007669"/>
    <property type="project" value="InterPro"/>
</dbReference>
<dbReference type="GO" id="GO:0019843">
    <property type="term" value="F:rRNA binding"/>
    <property type="evidence" value="ECO:0007669"/>
    <property type="project" value="UniProtKB-UniRule"/>
</dbReference>
<dbReference type="GO" id="GO:0003735">
    <property type="term" value="F:structural constituent of ribosome"/>
    <property type="evidence" value="ECO:0007669"/>
    <property type="project" value="InterPro"/>
</dbReference>
<dbReference type="GO" id="GO:0000028">
    <property type="term" value="P:ribosomal small subunit assembly"/>
    <property type="evidence" value="ECO:0007669"/>
    <property type="project" value="TreeGrafter"/>
</dbReference>
<dbReference type="GO" id="GO:0006412">
    <property type="term" value="P:translation"/>
    <property type="evidence" value="ECO:0007669"/>
    <property type="project" value="UniProtKB-UniRule"/>
</dbReference>
<dbReference type="FunFam" id="3.30.860.10:FF:000001">
    <property type="entry name" value="30S ribosomal protein S19"/>
    <property type="match status" value="1"/>
</dbReference>
<dbReference type="Gene3D" id="3.30.860.10">
    <property type="entry name" value="30s Ribosomal Protein S19, Chain A"/>
    <property type="match status" value="1"/>
</dbReference>
<dbReference type="HAMAP" id="MF_00531">
    <property type="entry name" value="Ribosomal_uS19"/>
    <property type="match status" value="1"/>
</dbReference>
<dbReference type="InterPro" id="IPR002222">
    <property type="entry name" value="Ribosomal_uS19"/>
</dbReference>
<dbReference type="InterPro" id="IPR005732">
    <property type="entry name" value="Ribosomal_uS19_bac-type"/>
</dbReference>
<dbReference type="InterPro" id="IPR020934">
    <property type="entry name" value="Ribosomal_uS19_CS"/>
</dbReference>
<dbReference type="InterPro" id="IPR023575">
    <property type="entry name" value="Ribosomal_uS19_SF"/>
</dbReference>
<dbReference type="NCBIfam" id="TIGR01050">
    <property type="entry name" value="rpsS_bact"/>
    <property type="match status" value="1"/>
</dbReference>
<dbReference type="PANTHER" id="PTHR11880">
    <property type="entry name" value="RIBOSOMAL PROTEIN S19P FAMILY MEMBER"/>
    <property type="match status" value="1"/>
</dbReference>
<dbReference type="PANTHER" id="PTHR11880:SF8">
    <property type="entry name" value="SMALL RIBOSOMAL SUBUNIT PROTEIN US19M"/>
    <property type="match status" value="1"/>
</dbReference>
<dbReference type="Pfam" id="PF00203">
    <property type="entry name" value="Ribosomal_S19"/>
    <property type="match status" value="1"/>
</dbReference>
<dbReference type="PIRSF" id="PIRSF002144">
    <property type="entry name" value="Ribosomal_S19"/>
    <property type="match status" value="1"/>
</dbReference>
<dbReference type="PRINTS" id="PR00975">
    <property type="entry name" value="RIBOSOMALS19"/>
</dbReference>
<dbReference type="SUPFAM" id="SSF54570">
    <property type="entry name" value="Ribosomal protein S19"/>
    <property type="match status" value="1"/>
</dbReference>
<dbReference type="PROSITE" id="PS00323">
    <property type="entry name" value="RIBOSOMAL_S19"/>
    <property type="match status" value="1"/>
</dbReference>
<keyword id="KW-1185">Reference proteome</keyword>
<keyword id="KW-0687">Ribonucleoprotein</keyword>
<keyword id="KW-0689">Ribosomal protein</keyword>
<keyword id="KW-0694">RNA-binding</keyword>
<keyword id="KW-0699">rRNA-binding</keyword>
<sequence length="94" mass="10707">MSRSLKKGPFVAESLIKKIEEMNEKGEKKVIKTWSRSSTIFPQMLGHTIAVHDGRKHVPVYISEDMVGHKLGEFVLTRTFKGHVDKTEKGTRVK</sequence>
<comment type="function">
    <text evidence="1">Protein S19 forms a complex with S13 that binds strongly to the 16S ribosomal RNA.</text>
</comment>
<comment type="similarity">
    <text evidence="1">Belongs to the universal ribosomal protein uS19 family.</text>
</comment>
<protein>
    <recommendedName>
        <fullName evidence="1">Small ribosomal subunit protein uS19</fullName>
    </recommendedName>
    <alternativeName>
        <fullName evidence="2">30S ribosomal protein S19</fullName>
    </alternativeName>
</protein>
<gene>
    <name evidence="1" type="primary">rpsS</name>
    <name type="ordered locus">NT01CX_1119</name>
</gene>
<organism>
    <name type="scientific">Clostridium novyi (strain NT)</name>
    <dbReference type="NCBI Taxonomy" id="386415"/>
    <lineage>
        <taxon>Bacteria</taxon>
        <taxon>Bacillati</taxon>
        <taxon>Bacillota</taxon>
        <taxon>Clostridia</taxon>
        <taxon>Eubacteriales</taxon>
        <taxon>Clostridiaceae</taxon>
        <taxon>Clostridium</taxon>
    </lineage>
</organism>
<proteinExistence type="inferred from homology"/>
<name>RS19_CLONN</name>
<evidence type="ECO:0000255" key="1">
    <source>
        <dbReference type="HAMAP-Rule" id="MF_00531"/>
    </source>
</evidence>
<evidence type="ECO:0000305" key="2"/>
<reference key="1">
    <citation type="journal article" date="2006" name="Nat. Biotechnol.">
        <title>The genome and transcriptomes of the anti-tumor agent Clostridium novyi-NT.</title>
        <authorList>
            <person name="Bettegowda C."/>
            <person name="Huang X."/>
            <person name="Lin J."/>
            <person name="Cheong I."/>
            <person name="Kohli M."/>
            <person name="Szabo S.A."/>
            <person name="Zhang X."/>
            <person name="Diaz L.A. Jr."/>
            <person name="Velculescu V.E."/>
            <person name="Parmigiani G."/>
            <person name="Kinzler K.W."/>
            <person name="Vogelstein B."/>
            <person name="Zhou S."/>
        </authorList>
    </citation>
    <scope>NUCLEOTIDE SEQUENCE [LARGE SCALE GENOMIC DNA]</scope>
    <source>
        <strain>NT</strain>
    </source>
</reference>
<feature type="chain" id="PRO_1000051040" description="Small ribosomal subunit protein uS19">
    <location>
        <begin position="1"/>
        <end position="94"/>
    </location>
</feature>
<accession>A0PXV0</accession>